<dbReference type="EMBL" id="AF027868">
    <property type="protein sequence ID" value="AAB84453.1"/>
    <property type="molecule type" value="Genomic_DNA"/>
</dbReference>
<dbReference type="EMBL" id="AL009126">
    <property type="protein sequence ID" value="CAB13764.1"/>
    <property type="molecule type" value="Genomic_DNA"/>
</dbReference>
<dbReference type="PIR" id="C69897">
    <property type="entry name" value="C69897"/>
</dbReference>
<dbReference type="RefSeq" id="NP_389753.1">
    <property type="nucleotide sequence ID" value="NC_000964.3"/>
</dbReference>
<dbReference type="RefSeq" id="WP_003231400.1">
    <property type="nucleotide sequence ID" value="NZ_OZ025638.1"/>
</dbReference>
<dbReference type="FunCoup" id="O34611">
    <property type="interactions" value="49"/>
</dbReference>
<dbReference type="STRING" id="224308.BSU18720"/>
<dbReference type="PaxDb" id="224308-BSU18720"/>
<dbReference type="EnsemblBacteria" id="CAB13764">
    <property type="protein sequence ID" value="CAB13764"/>
    <property type="gene ID" value="BSU_18720"/>
</dbReference>
<dbReference type="GeneID" id="939962"/>
<dbReference type="KEGG" id="bsu:BSU18720"/>
<dbReference type="PATRIC" id="fig|224308.179.peg.2041"/>
<dbReference type="eggNOG" id="COG2720">
    <property type="taxonomic scope" value="Bacteria"/>
</dbReference>
<dbReference type="InParanoid" id="O34611"/>
<dbReference type="OrthoDB" id="9813301at2"/>
<dbReference type="PhylomeDB" id="O34611"/>
<dbReference type="BioCyc" id="BSUB:BSU18720-MONOMER"/>
<dbReference type="Proteomes" id="UP000001570">
    <property type="component" value="Chromosome"/>
</dbReference>
<dbReference type="InterPro" id="IPR052913">
    <property type="entry name" value="Glycopeptide_resist_protein"/>
</dbReference>
<dbReference type="InterPro" id="IPR007391">
    <property type="entry name" value="Vancomycin_resist_VanW"/>
</dbReference>
<dbReference type="InterPro" id="IPR022029">
    <property type="entry name" value="YoaR-like_PG-bd"/>
</dbReference>
<dbReference type="PANTHER" id="PTHR35788:SF1">
    <property type="entry name" value="EXPORTED PROTEIN"/>
    <property type="match status" value="1"/>
</dbReference>
<dbReference type="PANTHER" id="PTHR35788">
    <property type="entry name" value="EXPORTED PROTEIN-RELATED"/>
    <property type="match status" value="1"/>
</dbReference>
<dbReference type="Pfam" id="PF12229">
    <property type="entry name" value="PG_binding_4"/>
    <property type="match status" value="1"/>
</dbReference>
<dbReference type="Pfam" id="PF04294">
    <property type="entry name" value="VanW"/>
    <property type="match status" value="1"/>
</dbReference>
<keyword id="KW-1185">Reference proteome</keyword>
<organism>
    <name type="scientific">Bacillus subtilis (strain 168)</name>
    <dbReference type="NCBI Taxonomy" id="224308"/>
    <lineage>
        <taxon>Bacteria</taxon>
        <taxon>Bacillati</taxon>
        <taxon>Bacillota</taxon>
        <taxon>Bacilli</taxon>
        <taxon>Bacillales</taxon>
        <taxon>Bacillaceae</taxon>
        <taxon>Bacillus</taxon>
    </lineage>
</organism>
<accession>O34611</accession>
<accession>Q796F1</accession>
<feature type="chain" id="PRO_0000389640" description="Uncharacterized protein YoaR">
    <location>
        <begin position="1"/>
        <end position="303"/>
    </location>
</feature>
<gene>
    <name type="primary">yoaR</name>
    <name type="ordered locus">BSU18720</name>
</gene>
<proteinExistence type="predicted"/>
<protein>
    <recommendedName>
        <fullName>Uncharacterized protein YoaR</fullName>
    </recommendedName>
</protein>
<reference key="1">
    <citation type="submission" date="1997-11" db="EMBL/GenBank/DDBJ databases">
        <title>Sequence analysis of the Bacillus subtilis chromosome region between the terC and odhAB loci cloned in a yeast artificial chromosome.</title>
        <authorList>
            <person name="Lapidus A."/>
            <person name="Galleron N."/>
            <person name="Sorokin A."/>
            <person name="Ehrlich D."/>
        </authorList>
    </citation>
    <scope>NUCLEOTIDE SEQUENCE [GENOMIC DNA]</scope>
</reference>
<reference key="2">
    <citation type="journal article" date="1997" name="Nature">
        <title>The complete genome sequence of the Gram-positive bacterium Bacillus subtilis.</title>
        <authorList>
            <person name="Kunst F."/>
            <person name="Ogasawara N."/>
            <person name="Moszer I."/>
            <person name="Albertini A.M."/>
            <person name="Alloni G."/>
            <person name="Azevedo V."/>
            <person name="Bertero M.G."/>
            <person name="Bessieres P."/>
            <person name="Bolotin A."/>
            <person name="Borchert S."/>
            <person name="Borriss R."/>
            <person name="Boursier L."/>
            <person name="Brans A."/>
            <person name="Braun M."/>
            <person name="Brignell S.C."/>
            <person name="Bron S."/>
            <person name="Brouillet S."/>
            <person name="Bruschi C.V."/>
            <person name="Caldwell B."/>
            <person name="Capuano V."/>
            <person name="Carter N.M."/>
            <person name="Choi S.-K."/>
            <person name="Codani J.-J."/>
            <person name="Connerton I.F."/>
            <person name="Cummings N.J."/>
            <person name="Daniel R.A."/>
            <person name="Denizot F."/>
            <person name="Devine K.M."/>
            <person name="Duesterhoeft A."/>
            <person name="Ehrlich S.D."/>
            <person name="Emmerson P.T."/>
            <person name="Entian K.-D."/>
            <person name="Errington J."/>
            <person name="Fabret C."/>
            <person name="Ferrari E."/>
            <person name="Foulger D."/>
            <person name="Fritz C."/>
            <person name="Fujita M."/>
            <person name="Fujita Y."/>
            <person name="Fuma S."/>
            <person name="Galizzi A."/>
            <person name="Galleron N."/>
            <person name="Ghim S.-Y."/>
            <person name="Glaser P."/>
            <person name="Goffeau A."/>
            <person name="Golightly E.J."/>
            <person name="Grandi G."/>
            <person name="Guiseppi G."/>
            <person name="Guy B.J."/>
            <person name="Haga K."/>
            <person name="Haiech J."/>
            <person name="Harwood C.R."/>
            <person name="Henaut A."/>
            <person name="Hilbert H."/>
            <person name="Holsappel S."/>
            <person name="Hosono S."/>
            <person name="Hullo M.-F."/>
            <person name="Itaya M."/>
            <person name="Jones L.-M."/>
            <person name="Joris B."/>
            <person name="Karamata D."/>
            <person name="Kasahara Y."/>
            <person name="Klaerr-Blanchard M."/>
            <person name="Klein C."/>
            <person name="Kobayashi Y."/>
            <person name="Koetter P."/>
            <person name="Koningstein G."/>
            <person name="Krogh S."/>
            <person name="Kumano M."/>
            <person name="Kurita K."/>
            <person name="Lapidus A."/>
            <person name="Lardinois S."/>
            <person name="Lauber J."/>
            <person name="Lazarevic V."/>
            <person name="Lee S.-M."/>
            <person name="Levine A."/>
            <person name="Liu H."/>
            <person name="Masuda S."/>
            <person name="Mauel C."/>
            <person name="Medigue C."/>
            <person name="Medina N."/>
            <person name="Mellado R.P."/>
            <person name="Mizuno M."/>
            <person name="Moestl D."/>
            <person name="Nakai S."/>
            <person name="Noback M."/>
            <person name="Noone D."/>
            <person name="O'Reilly M."/>
            <person name="Ogawa K."/>
            <person name="Ogiwara A."/>
            <person name="Oudega B."/>
            <person name="Park S.-H."/>
            <person name="Parro V."/>
            <person name="Pohl T.M."/>
            <person name="Portetelle D."/>
            <person name="Porwollik S."/>
            <person name="Prescott A.M."/>
            <person name="Presecan E."/>
            <person name="Pujic P."/>
            <person name="Purnelle B."/>
            <person name="Rapoport G."/>
            <person name="Rey M."/>
            <person name="Reynolds S."/>
            <person name="Rieger M."/>
            <person name="Rivolta C."/>
            <person name="Rocha E."/>
            <person name="Roche B."/>
            <person name="Rose M."/>
            <person name="Sadaie Y."/>
            <person name="Sato T."/>
            <person name="Scanlan E."/>
            <person name="Schleich S."/>
            <person name="Schroeter R."/>
            <person name="Scoffone F."/>
            <person name="Sekiguchi J."/>
            <person name="Sekowska A."/>
            <person name="Seror S.J."/>
            <person name="Serror P."/>
            <person name="Shin B.-S."/>
            <person name="Soldo B."/>
            <person name="Sorokin A."/>
            <person name="Tacconi E."/>
            <person name="Takagi T."/>
            <person name="Takahashi H."/>
            <person name="Takemaru K."/>
            <person name="Takeuchi M."/>
            <person name="Tamakoshi A."/>
            <person name="Tanaka T."/>
            <person name="Terpstra P."/>
            <person name="Tognoni A."/>
            <person name="Tosato V."/>
            <person name="Uchiyama S."/>
            <person name="Vandenbol M."/>
            <person name="Vannier F."/>
            <person name="Vassarotti A."/>
            <person name="Viari A."/>
            <person name="Wambutt R."/>
            <person name="Wedler E."/>
            <person name="Wedler H."/>
            <person name="Weitzenegger T."/>
            <person name="Winters P."/>
            <person name="Wipat A."/>
            <person name="Yamamoto H."/>
            <person name="Yamane K."/>
            <person name="Yasumoto K."/>
            <person name="Yata K."/>
            <person name="Yoshida K."/>
            <person name="Yoshikawa H.-F."/>
            <person name="Zumstein E."/>
            <person name="Yoshikawa H."/>
            <person name="Danchin A."/>
        </authorList>
    </citation>
    <scope>NUCLEOTIDE SEQUENCE [LARGE SCALE GENOMIC DNA]</scope>
    <source>
        <strain>168</strain>
    </source>
</reference>
<name>YOAR_BACSU</name>
<sequence length="303" mass="34084">MIQILITGLFLLAQPSEPQDSLTVTQQGRTIATVNREDFTMPLPGTPMVDYEKYSKFIKQLDQKVYREPINAVLNDHGSIVPGRVGYKLYQQAFMEKFYAYFYGQGPSKIEVPEMNIYPKVDSELLAHISTQQLGQYVTYFNSSNKSRSHNISLSAKAIDNHVVFPNETFSFNQVVGMRTRNKGYKSAPIIVKGELSEGVGGGICQVSSTLFNAVDRAGLQIVQRYSHTRSVPYVPPGRDATVSWGGPDFRFQNQYNQPILIRAKRYGGSMIITLYSSDVINSRLRKIPKAPSRIPKEINAEQ</sequence>